<comment type="function">
    <text evidence="1">Essential protein that plays a role in the control of cell division, possibly through the transcriptional regulation of ccrM, rpoD, pleC, minC and ftsZ genes.</text>
</comment>
<comment type="subcellular location">
    <subcellularLocation>
        <location evidence="1">Cytoplasm</location>
    </subcellularLocation>
</comment>
<feature type="chain" id="PRO_0000363198" description="Cell cycle response regulator CtrA">
    <location>
        <begin position="1"/>
        <end position="232"/>
    </location>
</feature>
<feature type="domain" description="Response regulatory" evidence="2">
    <location>
        <begin position="2"/>
        <end position="116"/>
    </location>
</feature>
<feature type="DNA-binding region" description="OmpR/PhoB-type" evidence="3">
    <location>
        <begin position="124"/>
        <end position="223"/>
    </location>
</feature>
<feature type="modified residue" description="4-aspartylphosphate" evidence="2">
    <location>
        <position position="51"/>
    </location>
</feature>
<gene>
    <name type="primary">ctrA</name>
    <name type="ordered locus">BCAN_A1634</name>
</gene>
<reference key="1">
    <citation type="submission" date="2007-10" db="EMBL/GenBank/DDBJ databases">
        <title>Brucella canis ATCC 23365 whole genome shotgun sequencing project.</title>
        <authorList>
            <person name="Setubal J.C."/>
            <person name="Bowns C."/>
            <person name="Boyle S."/>
            <person name="Crasta O.R."/>
            <person name="Czar M.J."/>
            <person name="Dharmanolla C."/>
            <person name="Gillespie J.J."/>
            <person name="Kenyon R.W."/>
            <person name="Lu J."/>
            <person name="Mane S."/>
            <person name="Mohapatra S."/>
            <person name="Nagrani S."/>
            <person name="Purkayastha A."/>
            <person name="Rajasimha H.K."/>
            <person name="Shallom J.M."/>
            <person name="Shallom S."/>
            <person name="Shukla M."/>
            <person name="Snyder E.E."/>
            <person name="Sobral B.W."/>
            <person name="Wattam A.R."/>
            <person name="Will R."/>
            <person name="Williams K."/>
            <person name="Yoo H."/>
            <person name="Bruce D."/>
            <person name="Detter C."/>
            <person name="Munk C."/>
            <person name="Brettin T.S."/>
        </authorList>
    </citation>
    <scope>NUCLEOTIDE SEQUENCE [LARGE SCALE GENOMIC DNA]</scope>
    <source>
        <strain>ATCC 23365 / NCTC 10854 / RM-666</strain>
    </source>
</reference>
<proteinExistence type="inferred from homology"/>
<accession>A9M708</accession>
<evidence type="ECO:0000250" key="1"/>
<evidence type="ECO:0000255" key="2">
    <source>
        <dbReference type="PROSITE-ProRule" id="PRU00169"/>
    </source>
</evidence>
<evidence type="ECO:0000255" key="3">
    <source>
        <dbReference type="PROSITE-ProRule" id="PRU01091"/>
    </source>
</evidence>
<name>CTRA_BRUC2</name>
<organism>
    <name type="scientific">Brucella canis (strain ATCC 23365 / NCTC 10854 / RM-666)</name>
    <dbReference type="NCBI Taxonomy" id="483179"/>
    <lineage>
        <taxon>Bacteria</taxon>
        <taxon>Pseudomonadati</taxon>
        <taxon>Pseudomonadota</taxon>
        <taxon>Alphaproteobacteria</taxon>
        <taxon>Hyphomicrobiales</taxon>
        <taxon>Brucellaceae</taxon>
        <taxon>Brucella/Ochrobactrum group</taxon>
        <taxon>Brucella</taxon>
    </lineage>
</organism>
<sequence length="232" mass="26066">MRVLLIEDDSAIAQSIELMLKSESFNVYTTDLGEEGIDLGKLYDYDIILLDLNLPDMSGYEVLRTLRLSKVKTPILILSGMAGIEDKVRGLGFGADDYMTKPFHKDELIARIHAIVRRSKGHAQSVITTGDLVVNLDAKTVEVAGQRVHLTGKEYQMLELLSLRKGTTLTKEMFLNHLYGGMDEPELKIIDVFICKLRKKLDAVSGNQSYIETVWGRGYVLREPDAEMRESA</sequence>
<protein>
    <recommendedName>
        <fullName>Cell cycle response regulator CtrA</fullName>
    </recommendedName>
</protein>
<dbReference type="EMBL" id="CP000872">
    <property type="protein sequence ID" value="ABX62655.1"/>
    <property type="molecule type" value="Genomic_DNA"/>
</dbReference>
<dbReference type="RefSeq" id="WP_002964699.1">
    <property type="nucleotide sequence ID" value="NC_010103.1"/>
</dbReference>
<dbReference type="SMR" id="A9M708"/>
<dbReference type="GeneID" id="97533230"/>
<dbReference type="KEGG" id="bcs:BCAN_A1634"/>
<dbReference type="HOGENOM" id="CLU_000445_30_1_5"/>
<dbReference type="PhylomeDB" id="A9M708"/>
<dbReference type="Proteomes" id="UP000001385">
    <property type="component" value="Chromosome I"/>
</dbReference>
<dbReference type="GO" id="GO:0005829">
    <property type="term" value="C:cytosol"/>
    <property type="evidence" value="ECO:0007669"/>
    <property type="project" value="TreeGrafter"/>
</dbReference>
<dbReference type="GO" id="GO:0032993">
    <property type="term" value="C:protein-DNA complex"/>
    <property type="evidence" value="ECO:0007669"/>
    <property type="project" value="TreeGrafter"/>
</dbReference>
<dbReference type="GO" id="GO:0000156">
    <property type="term" value="F:phosphorelay response regulator activity"/>
    <property type="evidence" value="ECO:0007669"/>
    <property type="project" value="TreeGrafter"/>
</dbReference>
<dbReference type="GO" id="GO:0000976">
    <property type="term" value="F:transcription cis-regulatory region binding"/>
    <property type="evidence" value="ECO:0007669"/>
    <property type="project" value="TreeGrafter"/>
</dbReference>
<dbReference type="GO" id="GO:0006355">
    <property type="term" value="P:regulation of DNA-templated transcription"/>
    <property type="evidence" value="ECO:0007669"/>
    <property type="project" value="InterPro"/>
</dbReference>
<dbReference type="CDD" id="cd17616">
    <property type="entry name" value="REC_OmpR_CtrA"/>
    <property type="match status" value="1"/>
</dbReference>
<dbReference type="CDD" id="cd00383">
    <property type="entry name" value="trans_reg_C"/>
    <property type="match status" value="1"/>
</dbReference>
<dbReference type="FunFam" id="1.10.10.10:FF:000052">
    <property type="entry name" value="Cell cycle response regulator"/>
    <property type="match status" value="1"/>
</dbReference>
<dbReference type="FunFam" id="3.40.50.2300:FF:000011">
    <property type="entry name" value="Cell cycle response regulator CtrA"/>
    <property type="match status" value="1"/>
</dbReference>
<dbReference type="Gene3D" id="3.40.50.2300">
    <property type="match status" value="1"/>
</dbReference>
<dbReference type="Gene3D" id="6.10.250.690">
    <property type="match status" value="1"/>
</dbReference>
<dbReference type="Gene3D" id="1.10.10.10">
    <property type="entry name" value="Winged helix-like DNA-binding domain superfamily/Winged helix DNA-binding domain"/>
    <property type="match status" value="1"/>
</dbReference>
<dbReference type="InterPro" id="IPR011006">
    <property type="entry name" value="CheY-like_superfamily"/>
</dbReference>
<dbReference type="InterPro" id="IPR001867">
    <property type="entry name" value="OmpR/PhoB-type_DNA-bd"/>
</dbReference>
<dbReference type="InterPro" id="IPR001789">
    <property type="entry name" value="Sig_transdc_resp-reg_receiver"/>
</dbReference>
<dbReference type="InterPro" id="IPR039420">
    <property type="entry name" value="WalR-like"/>
</dbReference>
<dbReference type="InterPro" id="IPR036388">
    <property type="entry name" value="WH-like_DNA-bd_sf"/>
</dbReference>
<dbReference type="NCBIfam" id="NF045991">
    <property type="entry name" value="RespRegCtrARhodob"/>
    <property type="match status" value="1"/>
</dbReference>
<dbReference type="PANTHER" id="PTHR48111">
    <property type="entry name" value="REGULATOR OF RPOS"/>
    <property type="match status" value="1"/>
</dbReference>
<dbReference type="PANTHER" id="PTHR48111:SF22">
    <property type="entry name" value="REGULATOR OF RPOS"/>
    <property type="match status" value="1"/>
</dbReference>
<dbReference type="Pfam" id="PF00072">
    <property type="entry name" value="Response_reg"/>
    <property type="match status" value="1"/>
</dbReference>
<dbReference type="Pfam" id="PF00486">
    <property type="entry name" value="Trans_reg_C"/>
    <property type="match status" value="1"/>
</dbReference>
<dbReference type="SMART" id="SM00448">
    <property type="entry name" value="REC"/>
    <property type="match status" value="1"/>
</dbReference>
<dbReference type="SMART" id="SM00862">
    <property type="entry name" value="Trans_reg_C"/>
    <property type="match status" value="1"/>
</dbReference>
<dbReference type="SUPFAM" id="SSF52172">
    <property type="entry name" value="CheY-like"/>
    <property type="match status" value="1"/>
</dbReference>
<dbReference type="PROSITE" id="PS51755">
    <property type="entry name" value="OMPR_PHOB"/>
    <property type="match status" value="1"/>
</dbReference>
<dbReference type="PROSITE" id="PS50110">
    <property type="entry name" value="RESPONSE_REGULATORY"/>
    <property type="match status" value="1"/>
</dbReference>
<keyword id="KW-0963">Cytoplasm</keyword>
<keyword id="KW-0238">DNA-binding</keyword>
<keyword id="KW-0597">Phosphoprotein</keyword>
<keyword id="KW-1185">Reference proteome</keyword>
<keyword id="KW-0804">Transcription</keyword>
<keyword id="KW-0805">Transcription regulation</keyword>
<keyword id="KW-0902">Two-component regulatory system</keyword>